<evidence type="ECO:0000250" key="1">
    <source>
        <dbReference type="UniProtKB" id="P00327"/>
    </source>
</evidence>
<evidence type="ECO:0000250" key="2">
    <source>
        <dbReference type="UniProtKB" id="P06525"/>
    </source>
</evidence>
<evidence type="ECO:0000305" key="3"/>
<organism>
    <name type="scientific">Oryza sativa subsp. japonica</name>
    <name type="common">Rice</name>
    <dbReference type="NCBI Taxonomy" id="39947"/>
    <lineage>
        <taxon>Eukaryota</taxon>
        <taxon>Viridiplantae</taxon>
        <taxon>Streptophyta</taxon>
        <taxon>Embryophyta</taxon>
        <taxon>Tracheophyta</taxon>
        <taxon>Spermatophyta</taxon>
        <taxon>Magnoliopsida</taxon>
        <taxon>Liliopsida</taxon>
        <taxon>Poales</taxon>
        <taxon>Poaceae</taxon>
        <taxon>BOP clade</taxon>
        <taxon>Oryzoideae</taxon>
        <taxon>Oryzeae</taxon>
        <taxon>Oryzinae</taxon>
        <taxon>Oryza</taxon>
        <taxon>Oryza sativa</taxon>
    </lineage>
</organism>
<name>ADH2_ORYSJ</name>
<accession>Q0ITW7</accession>
<accession>P18332</accession>
<accession>Q2R8Z2</accession>
<accession>Q9LLQ1</accession>
<keyword id="KW-0963">Cytoplasm</keyword>
<keyword id="KW-0479">Metal-binding</keyword>
<keyword id="KW-0520">NAD</keyword>
<keyword id="KW-0560">Oxidoreductase</keyword>
<keyword id="KW-1185">Reference proteome</keyword>
<keyword id="KW-0862">Zinc</keyword>
<feature type="chain" id="PRO_0000160708" description="Alcohol dehydrogenase 2">
    <location>
        <begin position="1"/>
        <end position="379"/>
    </location>
</feature>
<feature type="binding site" evidence="2">
    <location>
        <position position="47"/>
    </location>
    <ligand>
        <name>Zn(2+)</name>
        <dbReference type="ChEBI" id="CHEBI:29105"/>
        <label>1</label>
        <note>catalytic</note>
    </ligand>
</feature>
<feature type="binding site" evidence="2">
    <location>
        <position position="49"/>
    </location>
    <ligand>
        <name>an alcohol</name>
        <dbReference type="ChEBI" id="CHEBI:30879"/>
    </ligand>
</feature>
<feature type="binding site" evidence="2">
    <location>
        <position position="49"/>
    </location>
    <ligand>
        <name>NAD(+)</name>
        <dbReference type="ChEBI" id="CHEBI:57540"/>
    </ligand>
</feature>
<feature type="binding site" evidence="2">
    <location>
        <position position="49"/>
    </location>
    <ligand>
        <name>Zn(2+)</name>
        <dbReference type="ChEBI" id="CHEBI:29105"/>
        <label>1</label>
        <note>catalytic</note>
    </ligand>
</feature>
<feature type="binding site" evidence="1">
    <location>
        <position position="69"/>
    </location>
    <ligand>
        <name>an alcohol</name>
        <dbReference type="ChEBI" id="CHEBI:30879"/>
    </ligand>
</feature>
<feature type="binding site" evidence="2">
    <location>
        <position position="69"/>
    </location>
    <ligand>
        <name>Zn(2+)</name>
        <dbReference type="ChEBI" id="CHEBI:29105"/>
        <label>1</label>
        <note>catalytic</note>
    </ligand>
</feature>
<feature type="binding site" evidence="2">
    <location>
        <position position="99"/>
    </location>
    <ligand>
        <name>Zn(2+)</name>
        <dbReference type="ChEBI" id="CHEBI:29105"/>
        <label>2</label>
    </ligand>
</feature>
<feature type="binding site" evidence="2">
    <location>
        <position position="102"/>
    </location>
    <ligand>
        <name>Zn(2+)</name>
        <dbReference type="ChEBI" id="CHEBI:29105"/>
        <label>2</label>
    </ligand>
</feature>
<feature type="binding site" evidence="2">
    <location>
        <position position="105"/>
    </location>
    <ligand>
        <name>Zn(2+)</name>
        <dbReference type="ChEBI" id="CHEBI:29105"/>
        <label>2</label>
    </ligand>
</feature>
<feature type="binding site" evidence="2">
    <location>
        <position position="113"/>
    </location>
    <ligand>
        <name>Zn(2+)</name>
        <dbReference type="ChEBI" id="CHEBI:29105"/>
        <label>2</label>
    </ligand>
</feature>
<feature type="binding site" evidence="2">
    <location>
        <position position="177"/>
    </location>
    <ligand>
        <name>Zn(2+)</name>
        <dbReference type="ChEBI" id="CHEBI:29105"/>
        <label>1</label>
        <note>catalytic</note>
    </ligand>
</feature>
<feature type="binding site" evidence="2">
    <location>
        <begin position="202"/>
        <end position="207"/>
    </location>
    <ligand>
        <name>NAD(+)</name>
        <dbReference type="ChEBI" id="CHEBI:57540"/>
    </ligand>
</feature>
<feature type="binding site" evidence="2">
    <location>
        <position position="226"/>
    </location>
    <ligand>
        <name>NAD(+)</name>
        <dbReference type="ChEBI" id="CHEBI:57540"/>
    </ligand>
</feature>
<feature type="binding site" evidence="2">
    <location>
        <position position="231"/>
    </location>
    <ligand>
        <name>NAD(+)</name>
        <dbReference type="ChEBI" id="CHEBI:57540"/>
    </ligand>
</feature>
<feature type="binding site" evidence="2">
    <location>
        <position position="272"/>
    </location>
    <ligand>
        <name>NAD(+)</name>
        <dbReference type="ChEBI" id="CHEBI:57540"/>
    </ligand>
</feature>
<feature type="binding site" evidence="1">
    <location>
        <begin position="295"/>
        <end position="297"/>
    </location>
    <ligand>
        <name>NAD(+)</name>
        <dbReference type="ChEBI" id="CHEBI:57540"/>
    </ligand>
</feature>
<feature type="binding site" evidence="2">
    <location>
        <position position="295"/>
    </location>
    <ligand>
        <name>NAD(+)</name>
        <dbReference type="ChEBI" id="CHEBI:57540"/>
    </ligand>
</feature>
<feature type="binding site" evidence="2">
    <location>
        <position position="322"/>
    </location>
    <ligand>
        <name>NAD(+)</name>
        <dbReference type="ChEBI" id="CHEBI:57540"/>
    </ligand>
</feature>
<feature type="binding site" evidence="2">
    <location>
        <position position="372"/>
    </location>
    <ligand>
        <name>NAD(+)</name>
        <dbReference type="ChEBI" id="CHEBI:57540"/>
    </ligand>
</feature>
<feature type="sequence conflict" description="In Ref. 6; AK102799." evidence="3" ref="6">
    <original>L</original>
    <variation>I</variation>
    <location>
        <position position="42"/>
    </location>
</feature>
<sequence length="379" mass="41207">MATAGKVIKCKAAVAWEAGKPLSIEEVEVAPPQAMEVRVKILYTALCHTDVYFWEAKGQTPVFPRILGHEAGGIVESVGEGVTELAPGDHVLPVFTGECKECDHCKSEESNMCDLLRINVDRGVMIGDGKSRFTIKGKPIFHFVGTSTFSEYTVIHVGCLAKINPEAPLDKVCILSCGFSTGFGATVNVAKPKKGQTVAIFGLGAVGLAAMEGARLSGASRIIGVDLNPAKFEQAKKFGCTDFVNPKDHSKPVHEVLIEMTNGGLDRAVECTGNINAMISCFECVHDGWGVAVLVGVPTKDDVFKTHPMNFLNEKTLKGTFFGNYKPRTDLPNVVELYMKKELELEKFITHSVPFSEINTAFDLMLKGESLRCVMRMDE</sequence>
<comment type="catalytic activity">
    <reaction evidence="2">
        <text>a primary alcohol + NAD(+) = an aldehyde + NADH + H(+)</text>
        <dbReference type="Rhea" id="RHEA:10736"/>
        <dbReference type="ChEBI" id="CHEBI:15378"/>
        <dbReference type="ChEBI" id="CHEBI:15734"/>
        <dbReference type="ChEBI" id="CHEBI:17478"/>
        <dbReference type="ChEBI" id="CHEBI:57540"/>
        <dbReference type="ChEBI" id="CHEBI:57945"/>
        <dbReference type="EC" id="1.1.1.1"/>
    </reaction>
</comment>
<comment type="catalytic activity">
    <reaction evidence="2">
        <text>a secondary alcohol + NAD(+) = a ketone + NADH + H(+)</text>
        <dbReference type="Rhea" id="RHEA:10740"/>
        <dbReference type="ChEBI" id="CHEBI:15378"/>
        <dbReference type="ChEBI" id="CHEBI:17087"/>
        <dbReference type="ChEBI" id="CHEBI:35681"/>
        <dbReference type="ChEBI" id="CHEBI:57540"/>
        <dbReference type="ChEBI" id="CHEBI:57945"/>
        <dbReference type="EC" id="1.1.1.1"/>
    </reaction>
</comment>
<comment type="cofactor">
    <cofactor evidence="2">
        <name>Zn(2+)</name>
        <dbReference type="ChEBI" id="CHEBI:29105"/>
    </cofactor>
    <text evidence="2">Binds 2 Zn(2+) ions per subunit.</text>
</comment>
<comment type="subunit">
    <text evidence="2">Homodimer.</text>
</comment>
<comment type="subcellular location">
    <subcellularLocation>
        <location evidence="2">Cytoplasm</location>
    </subcellularLocation>
</comment>
<comment type="similarity">
    <text evidence="3">Belongs to the zinc-containing alcohol dehydrogenase family.</text>
</comment>
<comment type="sequence caution" evidence="3">
    <conflict type="frameshift">
        <sequence resource="EMBL" id="AK102799"/>
    </conflict>
</comment>
<comment type="sequence caution" evidence="3">
    <conflict type="erroneous gene model prediction">
        <sequence resource="EMBL-CDS" id="BAF27848"/>
    </conflict>
</comment>
<reference key="1">
    <citation type="journal article" date="2000" name="Plant Cell">
        <title>The complete sequence of 340 kb of DNA around the rice Adh1-Adh2 region reveals interrupted colinearity with maize chromosome 4.</title>
        <authorList>
            <person name="Tarchini R."/>
            <person name="Biddle P."/>
            <person name="Wineland R."/>
            <person name="Tingey S."/>
            <person name="Rafalski A."/>
        </authorList>
    </citation>
    <scope>NUCLEOTIDE SEQUENCE [GENOMIC DNA]</scope>
</reference>
<reference key="2">
    <citation type="journal article" date="2005" name="BMC Biol.">
        <title>The sequence of rice chromosomes 11 and 12, rich in disease resistance genes and recent gene duplications.</title>
        <authorList>
            <consortium name="The rice chromosomes 11 and 12 sequencing consortia"/>
        </authorList>
    </citation>
    <scope>NUCLEOTIDE SEQUENCE [LARGE SCALE GENOMIC DNA]</scope>
    <source>
        <strain>cv. Nipponbare</strain>
    </source>
</reference>
<reference key="3">
    <citation type="journal article" date="2005" name="Nature">
        <title>The map-based sequence of the rice genome.</title>
        <authorList>
            <consortium name="International rice genome sequencing project (IRGSP)"/>
        </authorList>
    </citation>
    <scope>NUCLEOTIDE SEQUENCE [LARGE SCALE GENOMIC DNA]</scope>
    <source>
        <strain>cv. Nipponbare</strain>
    </source>
</reference>
<reference key="4">
    <citation type="journal article" date="2008" name="Nucleic Acids Res.">
        <title>The rice annotation project database (RAP-DB): 2008 update.</title>
        <authorList>
            <consortium name="The rice annotation project (RAP)"/>
        </authorList>
    </citation>
    <scope>GENOME REANNOTATION</scope>
    <source>
        <strain>cv. Nipponbare</strain>
    </source>
</reference>
<reference key="5">
    <citation type="journal article" date="2013" name="Rice">
        <title>Improvement of the Oryza sativa Nipponbare reference genome using next generation sequence and optical map data.</title>
        <authorList>
            <person name="Kawahara Y."/>
            <person name="de la Bastide M."/>
            <person name="Hamilton J.P."/>
            <person name="Kanamori H."/>
            <person name="McCombie W.R."/>
            <person name="Ouyang S."/>
            <person name="Schwartz D.C."/>
            <person name="Tanaka T."/>
            <person name="Wu J."/>
            <person name="Zhou S."/>
            <person name="Childs K.L."/>
            <person name="Davidson R.M."/>
            <person name="Lin H."/>
            <person name="Quesada-Ocampo L."/>
            <person name="Vaillancourt B."/>
            <person name="Sakai H."/>
            <person name="Lee S.S."/>
            <person name="Kim J."/>
            <person name="Numa H."/>
            <person name="Itoh T."/>
            <person name="Buell C.R."/>
            <person name="Matsumoto T."/>
        </authorList>
    </citation>
    <scope>GENOME REANNOTATION</scope>
    <source>
        <strain>cv. Nipponbare</strain>
    </source>
</reference>
<reference key="6">
    <citation type="journal article" date="2003" name="Science">
        <title>Collection, mapping, and annotation of over 28,000 cDNA clones from japonica rice.</title>
        <authorList>
            <consortium name="The rice full-length cDNA consortium"/>
        </authorList>
    </citation>
    <scope>NUCLEOTIDE SEQUENCE [LARGE SCALE MRNA]</scope>
    <source>
        <strain>cv. Nipponbare</strain>
    </source>
</reference>
<protein>
    <recommendedName>
        <fullName>Alcohol dehydrogenase 2</fullName>
        <ecNumber evidence="2">1.1.1.1</ecNumber>
    </recommendedName>
</protein>
<dbReference type="EC" id="1.1.1.1" evidence="2"/>
<dbReference type="EMBL" id="AF172282">
    <property type="protein sequence ID" value="AAF34412.1"/>
    <property type="molecule type" value="Genomic_DNA"/>
</dbReference>
<dbReference type="EMBL" id="DP000010">
    <property type="protein sequence ID" value="ABA92034.1"/>
    <property type="molecule type" value="Genomic_DNA"/>
</dbReference>
<dbReference type="EMBL" id="AP008217">
    <property type="protein sequence ID" value="BAF27848.1"/>
    <property type="status" value="ALT_SEQ"/>
    <property type="molecule type" value="Genomic_DNA"/>
</dbReference>
<dbReference type="EMBL" id="AP014967">
    <property type="protein sequence ID" value="BAT13176.1"/>
    <property type="molecule type" value="Genomic_DNA"/>
</dbReference>
<dbReference type="EMBL" id="AK102799">
    <property type="status" value="NOT_ANNOTATED_CDS"/>
    <property type="molecule type" value="mRNA"/>
</dbReference>
<dbReference type="RefSeq" id="XP_015616854.1">
    <property type="nucleotide sequence ID" value="XM_015761368.1"/>
</dbReference>
<dbReference type="SMR" id="Q0ITW7"/>
<dbReference type="FunCoup" id="Q0ITW7">
    <property type="interactions" value="165"/>
</dbReference>
<dbReference type="STRING" id="39947.Q0ITW7"/>
<dbReference type="PaxDb" id="39947-Q0ITW7"/>
<dbReference type="EnsemblPlants" id="Os11t0210500-01">
    <property type="protein sequence ID" value="Os11t0210500-01"/>
    <property type="gene ID" value="Os11g0210500"/>
</dbReference>
<dbReference type="Gramene" id="Os11t0210500-01">
    <property type="protein sequence ID" value="Os11t0210500-01"/>
    <property type="gene ID" value="Os11g0210500"/>
</dbReference>
<dbReference type="KEGG" id="dosa:Os11g0210500"/>
<dbReference type="eggNOG" id="KOG0022">
    <property type="taxonomic scope" value="Eukaryota"/>
</dbReference>
<dbReference type="HOGENOM" id="CLU_026673_14_0_1"/>
<dbReference type="InParanoid" id="Q0ITW7"/>
<dbReference type="OMA" id="HISGCGV"/>
<dbReference type="OrthoDB" id="417550at2759"/>
<dbReference type="PlantReactome" id="R-OSA-1119267">
    <property type="pathway name" value="Phenylalanine degradation III"/>
</dbReference>
<dbReference type="Proteomes" id="UP000000763">
    <property type="component" value="Chromosome 11"/>
</dbReference>
<dbReference type="Proteomes" id="UP000059680">
    <property type="component" value="Chromosome 11"/>
</dbReference>
<dbReference type="ExpressionAtlas" id="Q0ITW7">
    <property type="expression patterns" value="baseline and differential"/>
</dbReference>
<dbReference type="GO" id="GO:0005829">
    <property type="term" value="C:cytosol"/>
    <property type="evidence" value="ECO:0000318"/>
    <property type="project" value="GO_Central"/>
</dbReference>
<dbReference type="GO" id="GO:0004022">
    <property type="term" value="F:alcohol dehydrogenase (NAD+) activity"/>
    <property type="evidence" value="ECO:0000318"/>
    <property type="project" value="GO_Central"/>
</dbReference>
<dbReference type="GO" id="GO:0051903">
    <property type="term" value="F:S-(hydroxymethyl)glutathione dehydrogenase [NAD(P)+] activity"/>
    <property type="evidence" value="ECO:0000318"/>
    <property type="project" value="GO_Central"/>
</dbReference>
<dbReference type="GO" id="GO:0008270">
    <property type="term" value="F:zinc ion binding"/>
    <property type="evidence" value="ECO:0000318"/>
    <property type="project" value="GO_Central"/>
</dbReference>
<dbReference type="GO" id="GO:0046294">
    <property type="term" value="P:formaldehyde catabolic process"/>
    <property type="evidence" value="ECO:0000318"/>
    <property type="project" value="GO_Central"/>
</dbReference>
<dbReference type="CDD" id="cd08301">
    <property type="entry name" value="alcohol_DH_plants"/>
    <property type="match status" value="1"/>
</dbReference>
<dbReference type="FunFam" id="3.90.180.10:FF:000067">
    <property type="entry name" value="alcohol dehydrogenase 1-like isoform X1"/>
    <property type="match status" value="1"/>
</dbReference>
<dbReference type="FunFam" id="3.40.50.720:FF:001292">
    <property type="entry name" value="Alcohol dehydrogenase class-P"/>
    <property type="match status" value="1"/>
</dbReference>
<dbReference type="Gene3D" id="3.90.180.10">
    <property type="entry name" value="Medium-chain alcohol dehydrogenases, catalytic domain"/>
    <property type="match status" value="1"/>
</dbReference>
<dbReference type="Gene3D" id="3.40.50.720">
    <property type="entry name" value="NAD(P)-binding Rossmann-like Domain"/>
    <property type="match status" value="1"/>
</dbReference>
<dbReference type="InterPro" id="IPR013149">
    <property type="entry name" value="ADH-like_C"/>
</dbReference>
<dbReference type="InterPro" id="IPR013154">
    <property type="entry name" value="ADH-like_N"/>
</dbReference>
<dbReference type="InterPro" id="IPR002328">
    <property type="entry name" value="ADH_Zn_CS"/>
</dbReference>
<dbReference type="InterPro" id="IPR011032">
    <property type="entry name" value="GroES-like_sf"/>
</dbReference>
<dbReference type="InterPro" id="IPR036291">
    <property type="entry name" value="NAD(P)-bd_dom_sf"/>
</dbReference>
<dbReference type="PANTHER" id="PTHR43880">
    <property type="entry name" value="ALCOHOL DEHYDROGENASE"/>
    <property type="match status" value="1"/>
</dbReference>
<dbReference type="PANTHER" id="PTHR43880:SF59">
    <property type="entry name" value="ALCOHOL DEHYDROGENASE 2"/>
    <property type="match status" value="1"/>
</dbReference>
<dbReference type="Pfam" id="PF08240">
    <property type="entry name" value="ADH_N"/>
    <property type="match status" value="1"/>
</dbReference>
<dbReference type="Pfam" id="PF00107">
    <property type="entry name" value="ADH_zinc_N"/>
    <property type="match status" value="1"/>
</dbReference>
<dbReference type="SUPFAM" id="SSF50129">
    <property type="entry name" value="GroES-like"/>
    <property type="match status" value="2"/>
</dbReference>
<dbReference type="SUPFAM" id="SSF51735">
    <property type="entry name" value="NAD(P)-binding Rossmann-fold domains"/>
    <property type="match status" value="1"/>
</dbReference>
<dbReference type="PROSITE" id="PS00059">
    <property type="entry name" value="ADH_ZINC"/>
    <property type="match status" value="1"/>
</dbReference>
<proteinExistence type="evidence at transcript level"/>
<gene>
    <name type="primary">ADH2</name>
    <name type="synonym">DUPR11.1</name>
    <name type="ordered locus">Os11g0210500</name>
    <name type="ordered locus">LOC_Os11g10510</name>
</gene>